<proteinExistence type="inferred from homology"/>
<evidence type="ECO:0000255" key="1">
    <source>
        <dbReference type="HAMAP-Rule" id="MF_00163"/>
    </source>
</evidence>
<gene>
    <name evidence="1" type="primary">def</name>
    <name type="ordered locus">SpyM3_1684</name>
</gene>
<name>DEF_STRP3</name>
<dbReference type="EC" id="3.5.1.88" evidence="1"/>
<dbReference type="EMBL" id="AE014074">
    <property type="protein sequence ID" value="AAM80291.1"/>
    <property type="molecule type" value="Genomic_DNA"/>
</dbReference>
<dbReference type="RefSeq" id="WP_002982624.1">
    <property type="nucleotide sequence ID" value="NC_004070.1"/>
</dbReference>
<dbReference type="SMR" id="P0DC96"/>
<dbReference type="GeneID" id="69901455"/>
<dbReference type="KEGG" id="spg:SpyM3_1684"/>
<dbReference type="HOGENOM" id="CLU_061901_4_0_9"/>
<dbReference type="Proteomes" id="UP000000564">
    <property type="component" value="Chromosome"/>
</dbReference>
<dbReference type="GO" id="GO:0046872">
    <property type="term" value="F:metal ion binding"/>
    <property type="evidence" value="ECO:0007669"/>
    <property type="project" value="UniProtKB-KW"/>
</dbReference>
<dbReference type="GO" id="GO:0042586">
    <property type="term" value="F:peptide deformylase activity"/>
    <property type="evidence" value="ECO:0007669"/>
    <property type="project" value="UniProtKB-UniRule"/>
</dbReference>
<dbReference type="GO" id="GO:0043686">
    <property type="term" value="P:co-translational protein modification"/>
    <property type="evidence" value="ECO:0007669"/>
    <property type="project" value="TreeGrafter"/>
</dbReference>
<dbReference type="GO" id="GO:0006412">
    <property type="term" value="P:translation"/>
    <property type="evidence" value="ECO:0007669"/>
    <property type="project" value="UniProtKB-UniRule"/>
</dbReference>
<dbReference type="CDD" id="cd00487">
    <property type="entry name" value="Pep_deformylase"/>
    <property type="match status" value="1"/>
</dbReference>
<dbReference type="FunFam" id="3.90.45.10:FF:000002">
    <property type="entry name" value="Peptide deformylase"/>
    <property type="match status" value="1"/>
</dbReference>
<dbReference type="Gene3D" id="3.90.45.10">
    <property type="entry name" value="Peptide deformylase"/>
    <property type="match status" value="1"/>
</dbReference>
<dbReference type="HAMAP" id="MF_00163">
    <property type="entry name" value="Pep_deformylase"/>
    <property type="match status" value="1"/>
</dbReference>
<dbReference type="InterPro" id="IPR023635">
    <property type="entry name" value="Peptide_deformylase"/>
</dbReference>
<dbReference type="InterPro" id="IPR036821">
    <property type="entry name" value="Peptide_deformylase_sf"/>
</dbReference>
<dbReference type="NCBIfam" id="TIGR00079">
    <property type="entry name" value="pept_deformyl"/>
    <property type="match status" value="1"/>
</dbReference>
<dbReference type="PANTHER" id="PTHR10458">
    <property type="entry name" value="PEPTIDE DEFORMYLASE"/>
    <property type="match status" value="1"/>
</dbReference>
<dbReference type="PANTHER" id="PTHR10458:SF8">
    <property type="entry name" value="PEPTIDE DEFORMYLASE 2"/>
    <property type="match status" value="1"/>
</dbReference>
<dbReference type="Pfam" id="PF01327">
    <property type="entry name" value="Pep_deformylase"/>
    <property type="match status" value="1"/>
</dbReference>
<dbReference type="PIRSF" id="PIRSF004749">
    <property type="entry name" value="Pep_def"/>
    <property type="match status" value="1"/>
</dbReference>
<dbReference type="PRINTS" id="PR01576">
    <property type="entry name" value="PDEFORMYLASE"/>
</dbReference>
<dbReference type="SUPFAM" id="SSF56420">
    <property type="entry name" value="Peptide deformylase"/>
    <property type="match status" value="1"/>
</dbReference>
<feature type="chain" id="PRO_0000082860" description="Peptide deformylase">
    <location>
        <begin position="1"/>
        <end position="204"/>
    </location>
</feature>
<feature type="active site" evidence="1">
    <location>
        <position position="175"/>
    </location>
</feature>
<feature type="binding site" evidence="1">
    <location>
        <position position="131"/>
    </location>
    <ligand>
        <name>Fe cation</name>
        <dbReference type="ChEBI" id="CHEBI:24875"/>
    </ligand>
</feature>
<feature type="binding site" evidence="1">
    <location>
        <position position="174"/>
    </location>
    <ligand>
        <name>Fe cation</name>
        <dbReference type="ChEBI" id="CHEBI:24875"/>
    </ligand>
</feature>
<feature type="binding site" evidence="1">
    <location>
        <position position="178"/>
    </location>
    <ligand>
        <name>Fe cation</name>
        <dbReference type="ChEBI" id="CHEBI:24875"/>
    </ligand>
</feature>
<accession>P0DC96</accession>
<accession>P68772</accession>
<accession>P82590</accession>
<accession>Q99XY7</accession>
<comment type="function">
    <text evidence="1">Removes the formyl group from the N-terminal Met of newly synthesized proteins. Requires at least a dipeptide for an efficient rate of reaction. N-terminal L-methionine is a prerequisite for activity but the enzyme has broad specificity at other positions.</text>
</comment>
<comment type="catalytic activity">
    <reaction evidence="1">
        <text>N-terminal N-formyl-L-methionyl-[peptide] + H2O = N-terminal L-methionyl-[peptide] + formate</text>
        <dbReference type="Rhea" id="RHEA:24420"/>
        <dbReference type="Rhea" id="RHEA-COMP:10639"/>
        <dbReference type="Rhea" id="RHEA-COMP:10640"/>
        <dbReference type="ChEBI" id="CHEBI:15377"/>
        <dbReference type="ChEBI" id="CHEBI:15740"/>
        <dbReference type="ChEBI" id="CHEBI:49298"/>
        <dbReference type="ChEBI" id="CHEBI:64731"/>
        <dbReference type="EC" id="3.5.1.88"/>
    </reaction>
</comment>
<comment type="cofactor">
    <cofactor evidence="1">
        <name>Fe(2+)</name>
        <dbReference type="ChEBI" id="CHEBI:29033"/>
    </cofactor>
    <text evidence="1">Binds 1 Fe(2+) ion.</text>
</comment>
<comment type="similarity">
    <text evidence="1">Belongs to the polypeptide deformylase family.</text>
</comment>
<sequence>MSAQDKLIKPSHLITMDDIIREGNPTLRAVAKEVSLPLCDEDILLGEKMMQFLKHSQDPVMAEKLGLRAGVGLAAPQIDVSKRIIAVLVPNLPDKEGNPPKEAYSWQEVLYNPKIVSHSVQDAALSDGEGCLSVDRVVEGYVVRHARVTVDYYDKEGQQHRIKLKGYNAIVVQHEIDHINGVLFYDRINAKNPFETKEELLILD</sequence>
<reference key="1">
    <citation type="journal article" date="2002" name="Proc. Natl. Acad. Sci. U.S.A.">
        <title>Genome sequence of a serotype M3 strain of group A Streptococcus: phage-encoded toxins, the high-virulence phenotype, and clone emergence.</title>
        <authorList>
            <person name="Beres S.B."/>
            <person name="Sylva G.L."/>
            <person name="Barbian K.D."/>
            <person name="Lei B."/>
            <person name="Hoff J.S."/>
            <person name="Mammarella N.D."/>
            <person name="Liu M.-Y."/>
            <person name="Smoot J.C."/>
            <person name="Porcella S.F."/>
            <person name="Parkins L.D."/>
            <person name="Campbell D.S."/>
            <person name="Smith T.M."/>
            <person name="McCormick J.K."/>
            <person name="Leung D.Y.M."/>
            <person name="Schlievert P.M."/>
            <person name="Musser J.M."/>
        </authorList>
    </citation>
    <scope>NUCLEOTIDE SEQUENCE [LARGE SCALE GENOMIC DNA]</scope>
    <source>
        <strain>ATCC BAA-595 / MGAS315</strain>
    </source>
</reference>
<protein>
    <recommendedName>
        <fullName evidence="1">Peptide deformylase</fullName>
        <shortName evidence="1">PDF</shortName>
        <ecNumber evidence="1">3.5.1.88</ecNumber>
    </recommendedName>
    <alternativeName>
        <fullName evidence="1">Polypeptide deformylase</fullName>
    </alternativeName>
</protein>
<keyword id="KW-0378">Hydrolase</keyword>
<keyword id="KW-0408">Iron</keyword>
<keyword id="KW-0479">Metal-binding</keyword>
<keyword id="KW-0648">Protein biosynthesis</keyword>
<organism>
    <name type="scientific">Streptococcus pyogenes serotype M3 (strain ATCC BAA-595 / MGAS315)</name>
    <dbReference type="NCBI Taxonomy" id="198466"/>
    <lineage>
        <taxon>Bacteria</taxon>
        <taxon>Bacillati</taxon>
        <taxon>Bacillota</taxon>
        <taxon>Bacilli</taxon>
        <taxon>Lactobacillales</taxon>
        <taxon>Streptococcaceae</taxon>
        <taxon>Streptococcus</taxon>
    </lineage>
</organism>